<feature type="chain" id="PRO_0000142864" description="Major surface glycoprotein G">
    <location>
        <begin position="1"/>
        <end position="391"/>
    </location>
</feature>
<feature type="topological domain" description="Intravirion" evidence="2">
    <location>
        <begin position="1"/>
        <end position="28"/>
    </location>
</feature>
<feature type="transmembrane region" description="Helical" evidence="2">
    <location>
        <begin position="29"/>
        <end position="49"/>
    </location>
</feature>
<feature type="topological domain" description="Virion surface" evidence="2">
    <location>
        <begin position="50"/>
        <end position="391"/>
    </location>
</feature>
<feature type="region of interest" description="Disordered" evidence="3">
    <location>
        <begin position="171"/>
        <end position="205"/>
    </location>
</feature>
<feature type="region of interest" description="Disordered" evidence="3">
    <location>
        <begin position="219"/>
        <end position="316"/>
    </location>
</feature>
<feature type="compositionally biased region" description="Polar residues" evidence="3">
    <location>
        <begin position="171"/>
        <end position="202"/>
    </location>
</feature>
<feature type="compositionally biased region" description="Polar residues" evidence="3">
    <location>
        <begin position="250"/>
        <end position="261"/>
    </location>
</feature>
<feature type="compositionally biased region" description="Polar residues" evidence="3">
    <location>
        <begin position="279"/>
        <end position="316"/>
    </location>
</feature>
<feature type="glycosylation site" description="N-linked (GlcNAc...) asparagine; by host" evidence="2">
    <location>
        <position position="173"/>
    </location>
</feature>
<feature type="glycosylation site" description="N-linked (GlcNAc...) asparagine; by host" evidence="2">
    <location>
        <position position="255"/>
    </location>
</feature>
<feature type="glycosylation site" description="N-linked (GlcNAc...) asparagine; by host" evidence="2">
    <location>
        <position position="303"/>
    </location>
</feature>
<feature type="glycosylation site" description="N-linked (GlcNAc...) asparagine; by host" evidence="2">
    <location>
        <position position="339"/>
    </location>
</feature>
<evidence type="ECO:0000250" key="1"/>
<evidence type="ECO:0000255" key="2"/>
<evidence type="ECO:0000256" key="3">
    <source>
        <dbReference type="SAM" id="MobiDB-lite"/>
    </source>
</evidence>
<organismHost>
    <name type="scientific">Meleagris gallopavo</name>
    <name type="common">Wild turkey</name>
    <dbReference type="NCBI Taxonomy" id="9103"/>
</organismHost>
<keyword id="KW-0325">Glycoprotein</keyword>
<keyword id="KW-0945">Host-virus interaction</keyword>
<keyword id="KW-0472">Membrane</keyword>
<keyword id="KW-0812">Transmembrane</keyword>
<keyword id="KW-1133">Transmembrane helix</keyword>
<keyword id="KW-1161">Viral attachment to host cell</keyword>
<keyword id="KW-0946">Virion</keyword>
<keyword id="KW-1160">Virus entry into host cell</keyword>
<name>VGLG_TRTV</name>
<dbReference type="EMBL" id="S40185">
    <property type="protein sequence ID" value="AAB22547.1"/>
    <property type="molecule type" value="mRNA"/>
</dbReference>
<dbReference type="PIR" id="JQ1626">
    <property type="entry name" value="JQ1626"/>
</dbReference>
<dbReference type="GlyCosmos" id="P33495">
    <property type="glycosylation" value="4 sites, No reported glycans"/>
</dbReference>
<dbReference type="GO" id="GO:0044228">
    <property type="term" value="C:host cell surface"/>
    <property type="evidence" value="ECO:0007669"/>
    <property type="project" value="UniProtKB-SubCell"/>
</dbReference>
<dbReference type="GO" id="GO:0016020">
    <property type="term" value="C:membrane"/>
    <property type="evidence" value="ECO:0007669"/>
    <property type="project" value="UniProtKB-KW"/>
</dbReference>
<dbReference type="GO" id="GO:0055036">
    <property type="term" value="C:virion membrane"/>
    <property type="evidence" value="ECO:0007669"/>
    <property type="project" value="UniProtKB-SubCell"/>
</dbReference>
<dbReference type="GO" id="GO:0046718">
    <property type="term" value="P:symbiont entry into host cell"/>
    <property type="evidence" value="ECO:0007669"/>
    <property type="project" value="UniProtKB-KW"/>
</dbReference>
<dbReference type="GO" id="GO:0019062">
    <property type="term" value="P:virion attachment to host cell"/>
    <property type="evidence" value="ECO:0007669"/>
    <property type="project" value="UniProtKB-KW"/>
</dbReference>
<dbReference type="InterPro" id="IPR008781">
    <property type="entry name" value="Pneumo_att_G"/>
</dbReference>
<dbReference type="Pfam" id="PF05539">
    <property type="entry name" value="Pneumo_att_G"/>
    <property type="match status" value="1"/>
</dbReference>
<sequence length="391" mass="42981">MGSKLYMVQGTSAYQTAVGFWLDIGRRYILAIVLSAFGLTCTVTIALTVSVIVEQSVLEECRNYNGGDRDWWSTTQEQPTTAPSATPAGNYGGLQTARTRKSESCLHVQISYGDMYSRSDTVLGGFDCMGLLVLCKSGPICQRDNQVDPTALCHCRVDLSSVDCCKVNKISTNSSTTSEPQKTNPAWPSQDNTDSDPNPQGITTSTATLLSTSLGLMLTSKTGTHKSGPPQALPGSNTNGKTTTDREPGPTNQPNSTTNGQHNKHTQRMTPPPSHDNTRTILQHTTPWEKTFSTYKPTHSPTNESDQSLPTTQNSINCEHFDPQGKEKICYRVGSYNSNITKQCRIDVPLCSTYSTVCMKTYYTEPFNCWRRIWRCLCDDGVGLVEWCCTS</sequence>
<organism>
    <name type="scientific">Turkey rhinotracheitis virus</name>
    <name type="common">TRTV</name>
    <dbReference type="NCBI Taxonomy" id="11264"/>
    <lineage>
        <taxon>Viruses</taxon>
        <taxon>Riboviria</taxon>
        <taxon>Orthornavirae</taxon>
        <taxon>Negarnaviricota</taxon>
        <taxon>Haploviricotina</taxon>
        <taxon>Monjiviricetes</taxon>
        <taxon>Mononegavirales</taxon>
        <taxon>Pneumoviridae</taxon>
        <taxon>Metapneumovirus</taxon>
        <taxon>Metapneumovirus avis</taxon>
    </lineage>
</organism>
<accession>P33495</accession>
<proteinExistence type="evidence at transcript level"/>
<gene>
    <name type="primary">G</name>
</gene>
<comment type="function">
    <text>It is likely to be the virus attachment protein.</text>
</comment>
<comment type="subcellular location">
    <subcellularLocation>
        <location>Host cell surface</location>
    </subcellularLocation>
    <subcellularLocation>
        <location>Virion membrane</location>
    </subcellularLocation>
    <text>Expressed on the surface of the infected cells and incorporated in the membrane of the virions.</text>
</comment>
<comment type="PTM">
    <text evidence="1">May carry a lot of separate O-linked carbohydrate chains distributed among serine and threonine residues.</text>
</comment>
<reference key="1">
    <citation type="journal article" date="1992" name="J. Gen. Virol.">
        <title>Sequence analysis of the 22K, SH and G genes of turkey rhinotracheitis virus and their intergenic regions reveals a gene order different from that of other pneumoviruses.</title>
        <authorList>
            <person name="Ling R."/>
            <person name="Easton A.J."/>
            <person name="Pringle C.R."/>
        </authorList>
    </citation>
    <scope>NUCLEOTIDE SEQUENCE [MRNA]</scope>
</reference>
<protein>
    <recommendedName>
        <fullName>Major surface glycoprotein G</fullName>
    </recommendedName>
    <alternativeName>
        <fullName>Attachment glycoprotein G</fullName>
    </alternativeName>
</protein>